<dbReference type="EMBL" id="CT827859">
    <property type="protein sequence ID" value="CAN88314.1"/>
    <property type="molecule type" value="Genomic_DNA"/>
</dbReference>
<dbReference type="EMBL" id="BC095228">
    <property type="protein sequence ID" value="AAH95228.1"/>
    <property type="molecule type" value="mRNA"/>
</dbReference>
<dbReference type="RefSeq" id="NP_001018198.1">
    <property type="nucleotide sequence ID" value="NM_001018678.1"/>
</dbReference>
<dbReference type="SMR" id="Q503Q1"/>
<dbReference type="FunCoup" id="Q503Q1">
    <property type="interactions" value="1178"/>
</dbReference>
<dbReference type="STRING" id="7955.ENSDARP00000103183"/>
<dbReference type="PaxDb" id="7955-ENSDARP00000103183"/>
<dbReference type="Ensembl" id="ENSDART00000109234">
    <property type="protein sequence ID" value="ENSDARP00000103183"/>
    <property type="gene ID" value="ENSDARG00000052343"/>
</dbReference>
<dbReference type="GeneID" id="497395"/>
<dbReference type="KEGG" id="dre:497395"/>
<dbReference type="AGR" id="ZFIN:ZDB-GENE-050522-306"/>
<dbReference type="CTD" id="132671"/>
<dbReference type="ZFIN" id="ZDB-GENE-050522-306">
    <property type="gene designation" value="spata18"/>
</dbReference>
<dbReference type="eggNOG" id="ENOG502QQMJ">
    <property type="taxonomic scope" value="Eukaryota"/>
</dbReference>
<dbReference type="HOGENOM" id="CLU_041752_0_0_1"/>
<dbReference type="InParanoid" id="Q503Q1"/>
<dbReference type="OMA" id="DQNLNIC"/>
<dbReference type="OrthoDB" id="5966837at2759"/>
<dbReference type="PhylomeDB" id="Q503Q1"/>
<dbReference type="TreeFam" id="TF328808"/>
<dbReference type="PRO" id="PR:Q503Q1"/>
<dbReference type="Proteomes" id="UP000000437">
    <property type="component" value="Chromosome 20"/>
</dbReference>
<dbReference type="Bgee" id="ENSDARG00000052343">
    <property type="expression patterns" value="Expressed in swim bladder and 25 other cell types or tissues"/>
</dbReference>
<dbReference type="GO" id="GO:0005737">
    <property type="term" value="C:cytoplasm"/>
    <property type="evidence" value="ECO:0000250"/>
    <property type="project" value="UniProtKB"/>
</dbReference>
<dbReference type="GO" id="GO:0043231">
    <property type="term" value="C:intracellular membrane-bounded organelle"/>
    <property type="evidence" value="ECO:0000250"/>
    <property type="project" value="UniProtKB"/>
</dbReference>
<dbReference type="GO" id="GO:0005759">
    <property type="term" value="C:mitochondrial matrix"/>
    <property type="evidence" value="ECO:0000250"/>
    <property type="project" value="UniProtKB"/>
</dbReference>
<dbReference type="GO" id="GO:0005741">
    <property type="term" value="C:mitochondrial outer membrane"/>
    <property type="evidence" value="ECO:0000318"/>
    <property type="project" value="GO_Central"/>
</dbReference>
<dbReference type="GO" id="GO:0005739">
    <property type="term" value="C:mitochondrion"/>
    <property type="evidence" value="ECO:0000250"/>
    <property type="project" value="UniProtKB"/>
</dbReference>
<dbReference type="GO" id="GO:1901612">
    <property type="term" value="F:cardiolipin binding"/>
    <property type="evidence" value="ECO:0000250"/>
    <property type="project" value="UniProtKB"/>
</dbReference>
<dbReference type="GO" id="GO:0035694">
    <property type="term" value="P:mitochondrial protein catabolic process"/>
    <property type="evidence" value="ECO:0000250"/>
    <property type="project" value="UniProtKB"/>
</dbReference>
<dbReference type="GO" id="GO:0035695">
    <property type="term" value="P:mitophagy by internal vacuole formation"/>
    <property type="evidence" value="ECO:0000318"/>
    <property type="project" value="GO_Central"/>
</dbReference>
<dbReference type="GO" id="GO:0048545">
    <property type="term" value="P:response to steroid hormone"/>
    <property type="evidence" value="ECO:0000270"/>
    <property type="project" value="ZFIN"/>
</dbReference>
<dbReference type="InterPro" id="IPR026169">
    <property type="entry name" value="MIEAP"/>
</dbReference>
<dbReference type="InterPro" id="IPR031981">
    <property type="entry name" value="MIEAP_C"/>
</dbReference>
<dbReference type="PANTHER" id="PTHR21771:SF0">
    <property type="entry name" value="MITOCHONDRIA-EATING PROTEIN"/>
    <property type="match status" value="1"/>
</dbReference>
<dbReference type="PANTHER" id="PTHR21771">
    <property type="entry name" value="MITOCHONDRIA-EATING PROTEIN-RELATED"/>
    <property type="match status" value="1"/>
</dbReference>
<dbReference type="Pfam" id="PF16026">
    <property type="entry name" value="MIEAP"/>
    <property type="match status" value="1"/>
</dbReference>
<keyword id="KW-0175">Coiled coil</keyword>
<keyword id="KW-0963">Cytoplasm</keyword>
<keyword id="KW-0446">Lipid-binding</keyword>
<keyword id="KW-0472">Membrane</keyword>
<keyword id="KW-0496">Mitochondrion</keyword>
<keyword id="KW-1000">Mitochondrion outer membrane</keyword>
<keyword id="KW-1185">Reference proteome</keyword>
<feature type="chain" id="PRO_0000254168" description="Mitochondria-eating protein">
    <location>
        <begin position="1"/>
        <end position="490"/>
    </location>
</feature>
<feature type="region of interest" description="Disordered" evidence="3">
    <location>
        <begin position="224"/>
        <end position="253"/>
    </location>
</feature>
<feature type="region of interest" description="Disordered" evidence="3">
    <location>
        <begin position="455"/>
        <end position="490"/>
    </location>
</feature>
<feature type="coiled-coil region" evidence="2">
    <location>
        <begin position="112"/>
        <end position="210"/>
    </location>
</feature>
<feature type="compositionally biased region" description="Low complexity" evidence="3">
    <location>
        <begin position="224"/>
        <end position="241"/>
    </location>
</feature>
<feature type="compositionally biased region" description="Low complexity" evidence="3">
    <location>
        <begin position="456"/>
        <end position="490"/>
    </location>
</feature>
<feature type="sequence conflict" description="In Ref. 2; AAH95228." evidence="4" ref="2">
    <original>R</original>
    <variation>K</variation>
    <location>
        <position position="223"/>
    </location>
</feature>
<feature type="sequence conflict" description="In Ref. 2; AAH95228." evidence="4" ref="2">
    <original>S</original>
    <variation>L</variation>
    <location>
        <position position="312"/>
    </location>
</feature>
<name>MIEAP_DANRE</name>
<reference key="1">
    <citation type="journal article" date="2013" name="Nature">
        <title>The zebrafish reference genome sequence and its relationship to the human genome.</title>
        <authorList>
            <person name="Howe K."/>
            <person name="Clark M.D."/>
            <person name="Torroja C.F."/>
            <person name="Torrance J."/>
            <person name="Berthelot C."/>
            <person name="Muffato M."/>
            <person name="Collins J.E."/>
            <person name="Humphray S."/>
            <person name="McLaren K."/>
            <person name="Matthews L."/>
            <person name="McLaren S."/>
            <person name="Sealy I."/>
            <person name="Caccamo M."/>
            <person name="Churcher C."/>
            <person name="Scott C."/>
            <person name="Barrett J.C."/>
            <person name="Koch R."/>
            <person name="Rauch G.J."/>
            <person name="White S."/>
            <person name="Chow W."/>
            <person name="Kilian B."/>
            <person name="Quintais L.T."/>
            <person name="Guerra-Assuncao J.A."/>
            <person name="Zhou Y."/>
            <person name="Gu Y."/>
            <person name="Yen J."/>
            <person name="Vogel J.H."/>
            <person name="Eyre T."/>
            <person name="Redmond S."/>
            <person name="Banerjee R."/>
            <person name="Chi J."/>
            <person name="Fu B."/>
            <person name="Langley E."/>
            <person name="Maguire S.F."/>
            <person name="Laird G.K."/>
            <person name="Lloyd D."/>
            <person name="Kenyon E."/>
            <person name="Donaldson S."/>
            <person name="Sehra H."/>
            <person name="Almeida-King J."/>
            <person name="Loveland J."/>
            <person name="Trevanion S."/>
            <person name="Jones M."/>
            <person name="Quail M."/>
            <person name="Willey D."/>
            <person name="Hunt A."/>
            <person name="Burton J."/>
            <person name="Sims S."/>
            <person name="McLay K."/>
            <person name="Plumb B."/>
            <person name="Davis J."/>
            <person name="Clee C."/>
            <person name="Oliver K."/>
            <person name="Clark R."/>
            <person name="Riddle C."/>
            <person name="Elliot D."/>
            <person name="Threadgold G."/>
            <person name="Harden G."/>
            <person name="Ware D."/>
            <person name="Begum S."/>
            <person name="Mortimore B."/>
            <person name="Kerry G."/>
            <person name="Heath P."/>
            <person name="Phillimore B."/>
            <person name="Tracey A."/>
            <person name="Corby N."/>
            <person name="Dunn M."/>
            <person name="Johnson C."/>
            <person name="Wood J."/>
            <person name="Clark S."/>
            <person name="Pelan S."/>
            <person name="Griffiths G."/>
            <person name="Smith M."/>
            <person name="Glithero R."/>
            <person name="Howden P."/>
            <person name="Barker N."/>
            <person name="Lloyd C."/>
            <person name="Stevens C."/>
            <person name="Harley J."/>
            <person name="Holt K."/>
            <person name="Panagiotidis G."/>
            <person name="Lovell J."/>
            <person name="Beasley H."/>
            <person name="Henderson C."/>
            <person name="Gordon D."/>
            <person name="Auger K."/>
            <person name="Wright D."/>
            <person name="Collins J."/>
            <person name="Raisen C."/>
            <person name="Dyer L."/>
            <person name="Leung K."/>
            <person name="Robertson L."/>
            <person name="Ambridge K."/>
            <person name="Leongamornlert D."/>
            <person name="McGuire S."/>
            <person name="Gilderthorp R."/>
            <person name="Griffiths C."/>
            <person name="Manthravadi D."/>
            <person name="Nichol S."/>
            <person name="Barker G."/>
            <person name="Whitehead S."/>
            <person name="Kay M."/>
            <person name="Brown J."/>
            <person name="Murnane C."/>
            <person name="Gray E."/>
            <person name="Humphries M."/>
            <person name="Sycamore N."/>
            <person name="Barker D."/>
            <person name="Saunders D."/>
            <person name="Wallis J."/>
            <person name="Babbage A."/>
            <person name="Hammond S."/>
            <person name="Mashreghi-Mohammadi M."/>
            <person name="Barr L."/>
            <person name="Martin S."/>
            <person name="Wray P."/>
            <person name="Ellington A."/>
            <person name="Matthews N."/>
            <person name="Ellwood M."/>
            <person name="Woodmansey R."/>
            <person name="Clark G."/>
            <person name="Cooper J."/>
            <person name="Tromans A."/>
            <person name="Grafham D."/>
            <person name="Skuce C."/>
            <person name="Pandian R."/>
            <person name="Andrews R."/>
            <person name="Harrison E."/>
            <person name="Kimberley A."/>
            <person name="Garnett J."/>
            <person name="Fosker N."/>
            <person name="Hall R."/>
            <person name="Garner P."/>
            <person name="Kelly D."/>
            <person name="Bird C."/>
            <person name="Palmer S."/>
            <person name="Gehring I."/>
            <person name="Berger A."/>
            <person name="Dooley C.M."/>
            <person name="Ersan-Urun Z."/>
            <person name="Eser C."/>
            <person name="Geiger H."/>
            <person name="Geisler M."/>
            <person name="Karotki L."/>
            <person name="Kirn A."/>
            <person name="Konantz J."/>
            <person name="Konantz M."/>
            <person name="Oberlander M."/>
            <person name="Rudolph-Geiger S."/>
            <person name="Teucke M."/>
            <person name="Lanz C."/>
            <person name="Raddatz G."/>
            <person name="Osoegawa K."/>
            <person name="Zhu B."/>
            <person name="Rapp A."/>
            <person name="Widaa S."/>
            <person name="Langford C."/>
            <person name="Yang F."/>
            <person name="Schuster S.C."/>
            <person name="Carter N.P."/>
            <person name="Harrow J."/>
            <person name="Ning Z."/>
            <person name="Herrero J."/>
            <person name="Searle S.M."/>
            <person name="Enright A."/>
            <person name="Geisler R."/>
            <person name="Plasterk R.H."/>
            <person name="Lee C."/>
            <person name="Westerfield M."/>
            <person name="de Jong P.J."/>
            <person name="Zon L.I."/>
            <person name="Postlethwait J.H."/>
            <person name="Nusslein-Volhard C."/>
            <person name="Hubbard T.J."/>
            <person name="Roest Crollius H."/>
            <person name="Rogers J."/>
            <person name="Stemple D.L."/>
        </authorList>
    </citation>
    <scope>NUCLEOTIDE SEQUENCE [LARGE SCALE GENOMIC DNA]</scope>
    <source>
        <strain>Tuebingen</strain>
    </source>
</reference>
<reference key="2">
    <citation type="submission" date="2005-05" db="EMBL/GenBank/DDBJ databases">
        <authorList>
            <consortium name="NIH - Zebrafish Gene Collection (ZGC) project"/>
        </authorList>
    </citation>
    <scope>NUCLEOTIDE SEQUENCE [LARGE SCALE MRNA]</scope>
    <source>
        <tissue>Olfactory epithelium</tissue>
    </source>
</reference>
<protein>
    <recommendedName>
        <fullName>Mitochondria-eating protein</fullName>
    </recommendedName>
    <alternativeName>
        <fullName>Spermatogenesis-associated protein 18</fullName>
    </alternativeName>
</protein>
<evidence type="ECO:0000250" key="1">
    <source>
        <dbReference type="UniProtKB" id="Q8TC71"/>
    </source>
</evidence>
<evidence type="ECO:0000255" key="2"/>
<evidence type="ECO:0000256" key="3">
    <source>
        <dbReference type="SAM" id="MobiDB-lite"/>
    </source>
</evidence>
<evidence type="ECO:0000305" key="4"/>
<sequence>MADTLRRLVNSSPYSVLQDKLDAWYKDYHVYSCDQNLNRCCELVELTSKIQGQLFTILNLTAQEGGHYSGVDTLKSRLLPWLGSCFTIAASAVSSDTSLSLIQESVEKDRKIRELSSVHESNLQKIEDQLCSTRIELDSVKRELVDTHIELDSTKNKSATTLLATEDEILHLKSELRVAQDQLDLYKRKLDVLDDYERQVRILRDEVSFLNAEKTVLQDRLARSRSPSPLLRRSRSVSPVRGESPTRAQLTSSSRHARLVSRFSDLYATERLESQSLLLKYIDDLETVQRILFIAAVESFQAAKLAYRQFKSRVRKTLSSTHIGPESLEDAVVDYIVRNLDLYDVQTSINDVINAMNVNPRISFPPEVDFVLISSFIREACRIAFAMQTLDPPLDLAFSSDGELYSDVKYRRSFDSEFTAPLVAFHVWPALLEGDTVILKGEAVTRRGALWKSRSRSSSPVRSRSGSPSRTFMASHSRSPSPGRLSSSRL</sequence>
<accession>Q503Q1</accession>
<accession>A5WWB1</accession>
<comment type="function">
    <text evidence="1">Key regulator of mitochondrial quality that mediates the repairing or degradation of unhealthy mitochondria in response to mitochondrial damage. Mediator of mitochondrial protein catabolic process (also named MALM) by mediating the degradation of damaged proteins inside mitochondria by promoting the accumulation in the mitochondrial matrix of hydrolases that are characteristic of the lysosomal lumen. Also involved in mitochondrion degradation of damaged mitochondria by promoting the formation of vacuole-like structures (named MIV), which engulf and degrade unhealthy mitochondria by accumulating lysosomes. Binds cardiolipin. May form molecular condensates (non-membrane-bounded organelles) within mitochondria that compartmentalize and promote cardiolipin metabolism.</text>
</comment>
<comment type="subcellular location">
    <subcellularLocation>
        <location evidence="1">Cytoplasm</location>
    </subcellularLocation>
    <subcellularLocation>
        <location evidence="1">Mitochondrion outer membrane</location>
    </subcellularLocation>
    <subcellularLocation>
        <location evidence="1">Mitochondrion matrix</location>
    </subcellularLocation>
    <text evidence="1">Localizes to the cytoplasm under normal conditions. Relocalizes to mitochondrion outer membrane following cellular stress. May form molecular condensates in the mitochondrial matrix.</text>
</comment>
<comment type="similarity">
    <text evidence="4">Belongs to the MIEAP family.</text>
</comment>
<proteinExistence type="evidence at transcript level"/>
<organism>
    <name type="scientific">Danio rerio</name>
    <name type="common">Zebrafish</name>
    <name type="synonym">Brachydanio rerio</name>
    <dbReference type="NCBI Taxonomy" id="7955"/>
    <lineage>
        <taxon>Eukaryota</taxon>
        <taxon>Metazoa</taxon>
        <taxon>Chordata</taxon>
        <taxon>Craniata</taxon>
        <taxon>Vertebrata</taxon>
        <taxon>Euteleostomi</taxon>
        <taxon>Actinopterygii</taxon>
        <taxon>Neopterygii</taxon>
        <taxon>Teleostei</taxon>
        <taxon>Ostariophysi</taxon>
        <taxon>Cypriniformes</taxon>
        <taxon>Danionidae</taxon>
        <taxon>Danioninae</taxon>
        <taxon>Danio</taxon>
    </lineage>
</organism>
<gene>
    <name type="primary">spata18</name>
    <name type="synonym">mieap</name>
    <name type="ORF">si:ch73-16a12.2</name>
    <name type="ORF">zgc:110352</name>
</gene>